<accession>C7GK54</accession>
<proteinExistence type="inferred from homology"/>
<comment type="function">
    <text evidence="1">Allows the formation of correctly charged Gln-tRNA(Gln) through the transamidation of misacylated Glu-tRNA(Gln) in the mitochondria. The reaction takes place in the presence of glutamine and ATP through an activated gamma-phospho-Glu-tRNA(Gln).</text>
</comment>
<comment type="catalytic activity">
    <reaction evidence="1">
        <text>L-glutamyl-tRNA(Gln) + L-glutamine + ATP + H2O = L-glutaminyl-tRNA(Gln) + L-glutamate + ADP + phosphate + H(+)</text>
        <dbReference type="Rhea" id="RHEA:17521"/>
        <dbReference type="Rhea" id="RHEA-COMP:9681"/>
        <dbReference type="Rhea" id="RHEA-COMP:9684"/>
        <dbReference type="ChEBI" id="CHEBI:15377"/>
        <dbReference type="ChEBI" id="CHEBI:15378"/>
        <dbReference type="ChEBI" id="CHEBI:29985"/>
        <dbReference type="ChEBI" id="CHEBI:30616"/>
        <dbReference type="ChEBI" id="CHEBI:43474"/>
        <dbReference type="ChEBI" id="CHEBI:58359"/>
        <dbReference type="ChEBI" id="CHEBI:78520"/>
        <dbReference type="ChEBI" id="CHEBI:78521"/>
        <dbReference type="ChEBI" id="CHEBI:456216"/>
    </reaction>
</comment>
<comment type="subunit">
    <text evidence="1">Subunit of the heterotrimeric GatFAB amidotransferase (AdT) complex, composed of A, B and F subunits.</text>
</comment>
<comment type="subcellular location">
    <subcellularLocation>
        <location evidence="1">Mitochondrion</location>
    </subcellularLocation>
</comment>
<comment type="miscellaneous">
    <text evidence="1">This protein may be expected to contain an N-terminal transit peptide but none has been predicted.</text>
</comment>
<comment type="similarity">
    <text evidence="1">Belongs to the GatB/GatE family. GatB subfamily.</text>
</comment>
<gene>
    <name evidence="1" type="primary">PET112</name>
    <name type="ORF">C1Q_00585</name>
</gene>
<evidence type="ECO:0000255" key="1">
    <source>
        <dbReference type="HAMAP-Rule" id="MF_03147"/>
    </source>
</evidence>
<sequence>MLQLARFYSLARTKAIHSHGAPFRPEYALKCGLEIHTQLNTKNKLFSQSTNSATSLVDAPNHHTSYYDIALPGTQPVLNLEAILFAMKLSLALGSQVNSISQFDRKHYFYGDQPQGYQLTQHYRPFARGGKINLSKELDDIDESAKEIGILQLQIEQDTGKSHYTETDKDVITLVDLNRSNVPLIELVTKPDFSDIKQVRAFIKKYQNLVRHLHISSGDLETGAMRVDVNLSINEYARVELKNLPNTSSIINAIKYEYQRQVELISVGDTSSLMEPETRGWTGSSTVKLRSKETTIDYRYMPDPELPYINLAQDVISGVRGLMPQLPDDIMRMLMKKPYQLSLKDAKILTYNSNQNDMYNHEALRSYYLDTFREFSKLAGERSNAKLPTNWIIHEFLGDLNKLQIPLARAKEILPPPVFAQFLKLLHEEVISATSGKMLLFHILENFKQSNCQDLSIPDFSKLIEKFELHAINQVDPQELMDLCNDVIAQHTDDTFIRNLVTGKKKSSLKFLIGQGMRRSQGRIKANEFEKKFKEILNIQW</sequence>
<organism>
    <name type="scientific">Saccharomyces cerevisiae (strain JAY291)</name>
    <name type="common">Baker's yeast</name>
    <dbReference type="NCBI Taxonomy" id="574961"/>
    <lineage>
        <taxon>Eukaryota</taxon>
        <taxon>Fungi</taxon>
        <taxon>Dikarya</taxon>
        <taxon>Ascomycota</taxon>
        <taxon>Saccharomycotina</taxon>
        <taxon>Saccharomycetes</taxon>
        <taxon>Saccharomycetales</taxon>
        <taxon>Saccharomycetaceae</taxon>
        <taxon>Saccharomyces</taxon>
    </lineage>
</organism>
<name>GATB_YEAS2</name>
<keyword id="KW-0067">ATP-binding</keyword>
<keyword id="KW-0436">Ligase</keyword>
<keyword id="KW-0496">Mitochondrion</keyword>
<keyword id="KW-0547">Nucleotide-binding</keyword>
<keyword id="KW-0648">Protein biosynthesis</keyword>
<protein>
    <recommendedName>
        <fullName evidence="1">Glutamyl-tRNA(Gln) amidotransferase subunit B, mitochondrial</fullName>
        <shortName evidence="1">Glu-AdT subunit B</shortName>
        <ecNumber evidence="1">6.3.5.-</ecNumber>
    </recommendedName>
</protein>
<reference key="1">
    <citation type="journal article" date="2009" name="Genome Res.">
        <title>Genome structure of a Saccharomyces cerevisiae strain widely used in bioethanol production.</title>
        <authorList>
            <person name="Argueso J.L."/>
            <person name="Carazzolle M.F."/>
            <person name="Mieczkowski P.A."/>
            <person name="Duarte F.M."/>
            <person name="Netto O.V.C."/>
            <person name="Missawa S.K."/>
            <person name="Galzerani F."/>
            <person name="Costa G.G.L."/>
            <person name="Vidal R.O."/>
            <person name="Noronha M.F."/>
            <person name="Dominska M."/>
            <person name="Andrietta M.G.S."/>
            <person name="Andrietta S.R."/>
            <person name="Cunha A.F."/>
            <person name="Gomes L.H."/>
            <person name="Tavares F.C.A."/>
            <person name="Alcarde A.R."/>
            <person name="Dietrich F.S."/>
            <person name="McCusker J.H."/>
            <person name="Petes T.D."/>
            <person name="Pereira G.A.G."/>
        </authorList>
    </citation>
    <scope>NUCLEOTIDE SEQUENCE [LARGE SCALE GENOMIC DNA]</scope>
    <source>
        <strain>JAY291</strain>
    </source>
</reference>
<feature type="chain" id="PRO_0000413276" description="Glutamyl-tRNA(Gln) amidotransferase subunit B, mitochondrial">
    <location>
        <begin position="1"/>
        <end position="541"/>
    </location>
</feature>
<dbReference type="EC" id="6.3.5.-" evidence="1"/>
<dbReference type="EMBL" id="ACFL01000019">
    <property type="protein sequence ID" value="EEU08822.1"/>
    <property type="molecule type" value="Genomic_DNA"/>
</dbReference>
<dbReference type="SMR" id="C7GK54"/>
<dbReference type="Proteomes" id="UP000008073">
    <property type="component" value="Unassembled WGS sequence"/>
</dbReference>
<dbReference type="GO" id="GO:0030956">
    <property type="term" value="C:glutamyl-tRNA(Gln) amidotransferase complex"/>
    <property type="evidence" value="ECO:0007669"/>
    <property type="project" value="UniProtKB-UniRule"/>
</dbReference>
<dbReference type="GO" id="GO:0005739">
    <property type="term" value="C:mitochondrion"/>
    <property type="evidence" value="ECO:0007669"/>
    <property type="project" value="UniProtKB-SubCell"/>
</dbReference>
<dbReference type="GO" id="GO:0005524">
    <property type="term" value="F:ATP binding"/>
    <property type="evidence" value="ECO:0007669"/>
    <property type="project" value="UniProtKB-KW"/>
</dbReference>
<dbReference type="GO" id="GO:0050567">
    <property type="term" value="F:glutaminyl-tRNA synthase (glutamine-hydrolyzing) activity"/>
    <property type="evidence" value="ECO:0007669"/>
    <property type="project" value="UniProtKB-UniRule"/>
</dbReference>
<dbReference type="GO" id="GO:0070681">
    <property type="term" value="P:glutaminyl-tRNAGln biosynthesis via transamidation"/>
    <property type="evidence" value="ECO:0007669"/>
    <property type="project" value="UniProtKB-UniRule"/>
</dbReference>
<dbReference type="GO" id="GO:0032543">
    <property type="term" value="P:mitochondrial translation"/>
    <property type="evidence" value="ECO:0007669"/>
    <property type="project" value="UniProtKB-UniRule"/>
</dbReference>
<dbReference type="FunFam" id="1.10.10.410:FF:000005">
    <property type="entry name" value="Glutamyl-tRNA(Gln) amidotransferase subunit B, mitochondrial"/>
    <property type="match status" value="1"/>
</dbReference>
<dbReference type="Gene3D" id="1.10.10.410">
    <property type="match status" value="1"/>
</dbReference>
<dbReference type="HAMAP" id="MF_00121">
    <property type="entry name" value="GatB"/>
    <property type="match status" value="1"/>
</dbReference>
<dbReference type="InterPro" id="IPR017959">
    <property type="entry name" value="Asn/Gln-tRNA_amidoTrfase_suB/E"/>
</dbReference>
<dbReference type="InterPro" id="IPR006075">
    <property type="entry name" value="Asn/Gln-tRNA_Trfase_suB/E_cat"/>
</dbReference>
<dbReference type="InterPro" id="IPR018027">
    <property type="entry name" value="Asn/Gln_amidotransferase"/>
</dbReference>
<dbReference type="InterPro" id="IPR003789">
    <property type="entry name" value="Asn/Gln_tRNA_amidoTrase-B-like"/>
</dbReference>
<dbReference type="InterPro" id="IPR004413">
    <property type="entry name" value="GatB"/>
</dbReference>
<dbReference type="InterPro" id="IPR023168">
    <property type="entry name" value="GatB_Yqey_C_2"/>
</dbReference>
<dbReference type="InterPro" id="IPR017958">
    <property type="entry name" value="Gln-tRNA_amidoTrfase_suB_CS"/>
</dbReference>
<dbReference type="InterPro" id="IPR014746">
    <property type="entry name" value="Gln_synth/guanido_kin_cat_dom"/>
</dbReference>
<dbReference type="NCBIfam" id="TIGR00133">
    <property type="entry name" value="gatB"/>
    <property type="match status" value="1"/>
</dbReference>
<dbReference type="NCBIfam" id="NF004012">
    <property type="entry name" value="PRK05477.1-2"/>
    <property type="match status" value="1"/>
</dbReference>
<dbReference type="PANTHER" id="PTHR11659">
    <property type="entry name" value="GLUTAMYL-TRNA GLN AMIDOTRANSFERASE SUBUNIT B MITOCHONDRIAL AND PROKARYOTIC PET112-RELATED"/>
    <property type="match status" value="1"/>
</dbReference>
<dbReference type="PANTHER" id="PTHR11659:SF0">
    <property type="entry name" value="GLUTAMYL-TRNA(GLN) AMIDOTRANSFERASE SUBUNIT B, MITOCHONDRIAL"/>
    <property type="match status" value="1"/>
</dbReference>
<dbReference type="Pfam" id="PF02934">
    <property type="entry name" value="GatB_N"/>
    <property type="match status" value="1"/>
</dbReference>
<dbReference type="Pfam" id="PF02637">
    <property type="entry name" value="GatB_Yqey"/>
    <property type="match status" value="1"/>
</dbReference>
<dbReference type="SMART" id="SM00845">
    <property type="entry name" value="GatB_Yqey"/>
    <property type="match status" value="1"/>
</dbReference>
<dbReference type="SUPFAM" id="SSF89095">
    <property type="entry name" value="GatB/YqeY motif"/>
    <property type="match status" value="1"/>
</dbReference>
<dbReference type="SUPFAM" id="SSF55931">
    <property type="entry name" value="Glutamine synthetase/guanido kinase"/>
    <property type="match status" value="1"/>
</dbReference>
<dbReference type="PROSITE" id="PS01234">
    <property type="entry name" value="GATB"/>
    <property type="match status" value="1"/>
</dbReference>